<dbReference type="EC" id="2.1.1.360"/>
<dbReference type="EMBL" id="CR382122">
    <property type="protein sequence ID" value="CAH01981.1"/>
    <property type="molecule type" value="Genomic_DNA"/>
</dbReference>
<dbReference type="RefSeq" id="XP_451588.1">
    <property type="nucleotide sequence ID" value="XM_451588.1"/>
</dbReference>
<dbReference type="SMR" id="Q6CWV1"/>
<dbReference type="FunCoup" id="Q6CWV1">
    <property type="interactions" value="42"/>
</dbReference>
<dbReference type="STRING" id="284590.Q6CWV1"/>
<dbReference type="PaxDb" id="284590-Q6CWV1"/>
<dbReference type="KEGG" id="kla:KLLA0_B01287g"/>
<dbReference type="eggNOG" id="KOG3924">
    <property type="taxonomic scope" value="Eukaryota"/>
</dbReference>
<dbReference type="HOGENOM" id="CLU_027287_0_1_1"/>
<dbReference type="InParanoid" id="Q6CWV1"/>
<dbReference type="OMA" id="VFHSYAK"/>
<dbReference type="Proteomes" id="UP000000598">
    <property type="component" value="Chromosome B"/>
</dbReference>
<dbReference type="GO" id="GO:0000781">
    <property type="term" value="C:chromosome, telomeric region"/>
    <property type="evidence" value="ECO:0007669"/>
    <property type="project" value="GOC"/>
</dbReference>
<dbReference type="GO" id="GO:0000786">
    <property type="term" value="C:nucleosome"/>
    <property type="evidence" value="ECO:0007669"/>
    <property type="project" value="InterPro"/>
</dbReference>
<dbReference type="GO" id="GO:0005634">
    <property type="term" value="C:nucleus"/>
    <property type="evidence" value="ECO:0007669"/>
    <property type="project" value="UniProtKB-SubCell"/>
</dbReference>
<dbReference type="GO" id="GO:0042393">
    <property type="term" value="F:histone binding"/>
    <property type="evidence" value="ECO:0007669"/>
    <property type="project" value="InterPro"/>
</dbReference>
<dbReference type="GO" id="GO:0140956">
    <property type="term" value="F:histone H3K79 trimethyltransferase activity"/>
    <property type="evidence" value="ECO:0007669"/>
    <property type="project" value="UniProtKB-EC"/>
</dbReference>
<dbReference type="GO" id="GO:0000077">
    <property type="term" value="P:DNA damage checkpoint signaling"/>
    <property type="evidence" value="ECO:0007669"/>
    <property type="project" value="InterPro"/>
</dbReference>
<dbReference type="GO" id="GO:0006281">
    <property type="term" value="P:DNA repair"/>
    <property type="evidence" value="ECO:0007669"/>
    <property type="project" value="InterPro"/>
</dbReference>
<dbReference type="GO" id="GO:0032259">
    <property type="term" value="P:methylation"/>
    <property type="evidence" value="ECO:0007669"/>
    <property type="project" value="UniProtKB-KW"/>
</dbReference>
<dbReference type="GO" id="GO:0031509">
    <property type="term" value="P:subtelomeric heterochromatin formation"/>
    <property type="evidence" value="ECO:0007669"/>
    <property type="project" value="InterPro"/>
</dbReference>
<dbReference type="FunFam" id="3.40.50.150:FF:000033">
    <property type="entry name" value="Histone-lysine N-methyltransferase, H3 lysine-79 specific"/>
    <property type="match status" value="1"/>
</dbReference>
<dbReference type="Gene3D" id="1.10.260.170">
    <property type="match status" value="1"/>
</dbReference>
<dbReference type="Gene3D" id="3.40.50.150">
    <property type="entry name" value="Vaccinia Virus protein VP39"/>
    <property type="match status" value="1"/>
</dbReference>
<dbReference type="InterPro" id="IPR021162">
    <property type="entry name" value="Dot1"/>
</dbReference>
<dbReference type="InterPro" id="IPR025789">
    <property type="entry name" value="DOT1_dom"/>
</dbReference>
<dbReference type="InterPro" id="IPR030445">
    <property type="entry name" value="H3-K79_meTrfase"/>
</dbReference>
<dbReference type="InterPro" id="IPR029063">
    <property type="entry name" value="SAM-dependent_MTases_sf"/>
</dbReference>
<dbReference type="PANTHER" id="PTHR21451">
    <property type="entry name" value="HISTONE H3 METHYLTRANSFERASE"/>
    <property type="match status" value="1"/>
</dbReference>
<dbReference type="PANTHER" id="PTHR21451:SF0">
    <property type="entry name" value="HISTONE-LYSINE N-METHYLTRANSFERASE, H3 LYSINE-79 SPECIFIC"/>
    <property type="match status" value="1"/>
</dbReference>
<dbReference type="Pfam" id="PF08123">
    <property type="entry name" value="DOT1"/>
    <property type="match status" value="1"/>
</dbReference>
<dbReference type="PIRSF" id="PIRSF017570">
    <property type="entry name" value="Histone_H3-K79_MeTrfase"/>
    <property type="match status" value="1"/>
</dbReference>
<dbReference type="SUPFAM" id="SSF53335">
    <property type="entry name" value="S-adenosyl-L-methionine-dependent methyltransferases"/>
    <property type="match status" value="1"/>
</dbReference>
<dbReference type="PROSITE" id="PS51569">
    <property type="entry name" value="DOT1"/>
    <property type="match status" value="1"/>
</dbReference>
<gene>
    <name type="primary">DOT1</name>
    <name type="ordered locus">KLLA0B01287g</name>
</gene>
<organism>
    <name type="scientific">Kluyveromyces lactis (strain ATCC 8585 / CBS 2359 / DSM 70799 / NBRC 1267 / NRRL Y-1140 / WM37)</name>
    <name type="common">Yeast</name>
    <name type="synonym">Candida sphaerica</name>
    <dbReference type="NCBI Taxonomy" id="284590"/>
    <lineage>
        <taxon>Eukaryota</taxon>
        <taxon>Fungi</taxon>
        <taxon>Dikarya</taxon>
        <taxon>Ascomycota</taxon>
        <taxon>Saccharomycotina</taxon>
        <taxon>Saccharomycetes</taxon>
        <taxon>Saccharomycetales</taxon>
        <taxon>Saccharomycetaceae</taxon>
        <taxon>Kluyveromyces</taxon>
    </lineage>
</organism>
<reference key="1">
    <citation type="journal article" date="2004" name="Nature">
        <title>Genome evolution in yeasts.</title>
        <authorList>
            <person name="Dujon B."/>
            <person name="Sherman D."/>
            <person name="Fischer G."/>
            <person name="Durrens P."/>
            <person name="Casaregola S."/>
            <person name="Lafontaine I."/>
            <person name="de Montigny J."/>
            <person name="Marck C."/>
            <person name="Neuveglise C."/>
            <person name="Talla E."/>
            <person name="Goffard N."/>
            <person name="Frangeul L."/>
            <person name="Aigle M."/>
            <person name="Anthouard V."/>
            <person name="Babour A."/>
            <person name="Barbe V."/>
            <person name="Barnay S."/>
            <person name="Blanchin S."/>
            <person name="Beckerich J.-M."/>
            <person name="Beyne E."/>
            <person name="Bleykasten C."/>
            <person name="Boisrame A."/>
            <person name="Boyer J."/>
            <person name="Cattolico L."/>
            <person name="Confanioleri F."/>
            <person name="de Daruvar A."/>
            <person name="Despons L."/>
            <person name="Fabre E."/>
            <person name="Fairhead C."/>
            <person name="Ferry-Dumazet H."/>
            <person name="Groppi A."/>
            <person name="Hantraye F."/>
            <person name="Hennequin C."/>
            <person name="Jauniaux N."/>
            <person name="Joyet P."/>
            <person name="Kachouri R."/>
            <person name="Kerrest A."/>
            <person name="Koszul R."/>
            <person name="Lemaire M."/>
            <person name="Lesur I."/>
            <person name="Ma L."/>
            <person name="Muller H."/>
            <person name="Nicaud J.-M."/>
            <person name="Nikolski M."/>
            <person name="Oztas S."/>
            <person name="Ozier-Kalogeropoulos O."/>
            <person name="Pellenz S."/>
            <person name="Potier S."/>
            <person name="Richard G.-F."/>
            <person name="Straub M.-L."/>
            <person name="Suleau A."/>
            <person name="Swennen D."/>
            <person name="Tekaia F."/>
            <person name="Wesolowski-Louvel M."/>
            <person name="Westhof E."/>
            <person name="Wirth B."/>
            <person name="Zeniou-Meyer M."/>
            <person name="Zivanovic Y."/>
            <person name="Bolotin-Fukuhara M."/>
            <person name="Thierry A."/>
            <person name="Bouchier C."/>
            <person name="Caudron B."/>
            <person name="Scarpelli C."/>
            <person name="Gaillardin C."/>
            <person name="Weissenbach J."/>
            <person name="Wincker P."/>
            <person name="Souciet J.-L."/>
        </authorList>
    </citation>
    <scope>NUCLEOTIDE SEQUENCE [LARGE SCALE GENOMIC DNA]</scope>
    <source>
        <strain>ATCC 8585 / CBS 2359 / DSM 70799 / NBRC 1267 / NRRL Y-1140 / WM37</strain>
    </source>
</reference>
<protein>
    <recommendedName>
        <fullName>Histone-lysine N-methyltransferase, H3 lysine-79 specific</fullName>
        <ecNumber>2.1.1.360</ecNumber>
    </recommendedName>
    <alternativeName>
        <fullName>Histone H3-K79 methyltransferase</fullName>
        <shortName>H3-K79-HMTase</shortName>
    </alternativeName>
</protein>
<accession>Q6CWV1</accession>
<evidence type="ECO:0000250" key="1"/>
<evidence type="ECO:0000250" key="2">
    <source>
        <dbReference type="UniProtKB" id="Q04089"/>
    </source>
</evidence>
<evidence type="ECO:0000255" key="3">
    <source>
        <dbReference type="PROSITE-ProRule" id="PRU00902"/>
    </source>
</evidence>
<evidence type="ECO:0000256" key="4">
    <source>
        <dbReference type="SAM" id="MobiDB-lite"/>
    </source>
</evidence>
<comment type="function">
    <text evidence="2">Histone methyltransferase that specifically trimethylates histone H3 to form H3K79me3. This methylation is required for telomere silencing and for the pachytene checkpoint during the meiotic cell cycle by allowing the recruitment of RAD9 to double strand breaks. Nucleosomes are preferred as substrate compared to free histone.</text>
</comment>
<comment type="catalytic activity">
    <reaction evidence="2 3">
        <text>L-lysyl(79)-[histone H3] + 3 S-adenosyl-L-methionine = N(6),N(6),N(6)-trimethyl-L-lysyl(79)-[histone H3] + 3 S-adenosyl-L-homocysteine + 3 H(+)</text>
        <dbReference type="Rhea" id="RHEA:60328"/>
        <dbReference type="Rhea" id="RHEA-COMP:15549"/>
        <dbReference type="Rhea" id="RHEA-COMP:15552"/>
        <dbReference type="ChEBI" id="CHEBI:15378"/>
        <dbReference type="ChEBI" id="CHEBI:29969"/>
        <dbReference type="ChEBI" id="CHEBI:57856"/>
        <dbReference type="ChEBI" id="CHEBI:59789"/>
        <dbReference type="ChEBI" id="CHEBI:61961"/>
        <dbReference type="EC" id="2.1.1.360"/>
    </reaction>
</comment>
<comment type="activity regulation">
    <text evidence="1">Ubiquitination of histone H2B to form H2BK123ub1 is required for efficient DOT1 methyltransferase activity on histone H3.</text>
</comment>
<comment type="subcellular location">
    <subcellularLocation>
        <location evidence="1">Nucleus</location>
    </subcellularLocation>
</comment>
<comment type="miscellaneous">
    <text>In contrast to other lysine histone methyltransferases, it does not contain a SET domain, suggesting the existence of another mechanism for methylation of lysine residues of histones.</text>
</comment>
<comment type="similarity">
    <text evidence="3">Belongs to the class I-like SAM-binding methyltransferase superfamily. DOT1 family.</text>
</comment>
<keyword id="KW-0156">Chromatin regulator</keyword>
<keyword id="KW-0489">Methyltransferase</keyword>
<keyword id="KW-0539">Nucleus</keyword>
<keyword id="KW-1185">Reference proteome</keyword>
<keyword id="KW-0677">Repeat</keyword>
<keyword id="KW-0949">S-adenosyl-L-methionine</keyword>
<keyword id="KW-0804">Transcription</keyword>
<keyword id="KW-0805">Transcription regulation</keyword>
<keyword id="KW-0808">Transferase</keyword>
<feature type="chain" id="PRO_0000270614" description="Histone-lysine N-methyltransferase, H3 lysine-79 specific">
    <location>
        <begin position="1"/>
        <end position="572"/>
    </location>
</feature>
<feature type="domain" description="DOT1" evidence="3">
    <location>
        <begin position="245"/>
        <end position="558"/>
    </location>
</feature>
<feature type="region of interest" description="Disordered" evidence="4">
    <location>
        <begin position="1"/>
        <end position="48"/>
    </location>
</feature>
<feature type="region of interest" description="Disordered" evidence="4">
    <location>
        <begin position="75"/>
        <end position="173"/>
    </location>
</feature>
<feature type="compositionally biased region" description="Polar residues" evidence="4">
    <location>
        <begin position="1"/>
        <end position="19"/>
    </location>
</feature>
<feature type="compositionally biased region" description="Basic and acidic residues" evidence="4">
    <location>
        <begin position="20"/>
        <end position="31"/>
    </location>
</feature>
<feature type="compositionally biased region" description="Basic and acidic residues" evidence="4">
    <location>
        <begin position="101"/>
        <end position="111"/>
    </location>
</feature>
<feature type="binding site" evidence="3">
    <location>
        <begin position="361"/>
        <end position="364"/>
    </location>
    <ligand>
        <name>S-adenosyl-L-methionine</name>
        <dbReference type="ChEBI" id="CHEBI:59789"/>
    </ligand>
</feature>
<feature type="binding site" evidence="3">
    <location>
        <begin position="384"/>
        <end position="393"/>
    </location>
    <ligand>
        <name>S-adenosyl-L-methionine</name>
        <dbReference type="ChEBI" id="CHEBI:59789"/>
    </ligand>
</feature>
<feature type="binding site" evidence="3">
    <location>
        <position position="411"/>
    </location>
    <ligand>
        <name>S-adenosyl-L-methionine</name>
        <dbReference type="ChEBI" id="CHEBI:59789"/>
    </ligand>
</feature>
<feature type="binding site" evidence="3">
    <location>
        <begin position="448"/>
        <end position="449"/>
    </location>
    <ligand>
        <name>S-adenosyl-L-methionine</name>
        <dbReference type="ChEBI" id="CHEBI:59789"/>
    </ligand>
</feature>
<name>DOT1_KLULA</name>
<sequence>MSTEATSSDASVFSNMHSVDSTRDNTRDNTRDNTPMNEGDTQGKRMTKSTMALIEESMKYDMRSEYFLPMTFLRERRKPARVESDEEDKLAEVKSKRRVSKKDQVKADIHSTKIKKTGRPSNVKAGAKNTSKVTKQRSTKSQVSGKKRARSISDGKVSSIDASRSLKASKKKHSSHADSLFLSNIEENVNPRPSFFNTTLIANPSSFTNKLTSSKMFVDDEEVTSLKGMKYILFPGVEEEYLICSKVQKFGYNPLPEIGQSIESAVLLYFPNTYKTKGQELVRSLNDAFERSDDQSFEKIVLKYNDLISTIPRDLIVKNLSSNPDVPVSFVHFLLHTCYTRAIYPHARKLKKYTSFSNFVYGELMPDFLTIVFKKCGLNSNSIFMDLGSGVGNCVIQASLEFGCKLSFGCEIMDSASDMAELQLKELKSRCDLWGINLPPIDFSLRKSFVDNERVRELIPQCDVILINNFIFDAPLNKEVEKVVQGLKAGSKIISLKSIRPPGYSINYDDMDNIFNRLHVESFKLPENSVSWTYRSVGDYYISTVLDAIDESIFCPPILGRIRKKESIKYTR</sequence>
<proteinExistence type="inferred from homology"/>